<gene>
    <name evidence="1" type="primary">valS</name>
    <name type="ordered locus">LHK_01113</name>
</gene>
<dbReference type="EC" id="6.1.1.9" evidence="1"/>
<dbReference type="EMBL" id="CP001154">
    <property type="protein sequence ID" value="ACO74105.1"/>
    <property type="molecule type" value="Genomic_DNA"/>
</dbReference>
<dbReference type="RefSeq" id="WP_012696595.1">
    <property type="nucleotide sequence ID" value="NC_012559.1"/>
</dbReference>
<dbReference type="SMR" id="C1D6J9"/>
<dbReference type="STRING" id="557598.LHK_01113"/>
<dbReference type="KEGG" id="lhk:LHK_01113"/>
<dbReference type="eggNOG" id="COG0525">
    <property type="taxonomic scope" value="Bacteria"/>
</dbReference>
<dbReference type="HOGENOM" id="CLU_001493_0_2_4"/>
<dbReference type="Proteomes" id="UP000002010">
    <property type="component" value="Chromosome"/>
</dbReference>
<dbReference type="GO" id="GO:0005829">
    <property type="term" value="C:cytosol"/>
    <property type="evidence" value="ECO:0007669"/>
    <property type="project" value="TreeGrafter"/>
</dbReference>
<dbReference type="GO" id="GO:0002161">
    <property type="term" value="F:aminoacyl-tRNA deacylase activity"/>
    <property type="evidence" value="ECO:0007669"/>
    <property type="project" value="InterPro"/>
</dbReference>
<dbReference type="GO" id="GO:0005524">
    <property type="term" value="F:ATP binding"/>
    <property type="evidence" value="ECO:0007669"/>
    <property type="project" value="UniProtKB-UniRule"/>
</dbReference>
<dbReference type="GO" id="GO:0004832">
    <property type="term" value="F:valine-tRNA ligase activity"/>
    <property type="evidence" value="ECO:0007669"/>
    <property type="project" value="UniProtKB-UniRule"/>
</dbReference>
<dbReference type="GO" id="GO:0006438">
    <property type="term" value="P:valyl-tRNA aminoacylation"/>
    <property type="evidence" value="ECO:0007669"/>
    <property type="project" value="UniProtKB-UniRule"/>
</dbReference>
<dbReference type="CDD" id="cd07962">
    <property type="entry name" value="Anticodon_Ia_Val"/>
    <property type="match status" value="1"/>
</dbReference>
<dbReference type="CDD" id="cd00817">
    <property type="entry name" value="ValRS_core"/>
    <property type="match status" value="1"/>
</dbReference>
<dbReference type="FunFam" id="1.10.287.380:FF:000001">
    <property type="entry name" value="Valine--tRNA ligase"/>
    <property type="match status" value="1"/>
</dbReference>
<dbReference type="FunFam" id="1.10.730.10:FF:000009">
    <property type="entry name" value="Valine--tRNA ligase, mitochondrial"/>
    <property type="match status" value="1"/>
</dbReference>
<dbReference type="FunFam" id="3.40.50.620:FF:000020">
    <property type="entry name" value="Valine--tRNA ligase, mitochondrial"/>
    <property type="match status" value="1"/>
</dbReference>
<dbReference type="FunFam" id="3.40.50.620:FF:000078">
    <property type="entry name" value="Valine--tRNA ligase, mitochondrial"/>
    <property type="match status" value="1"/>
</dbReference>
<dbReference type="Gene3D" id="3.40.50.620">
    <property type="entry name" value="HUPs"/>
    <property type="match status" value="2"/>
</dbReference>
<dbReference type="Gene3D" id="1.10.730.10">
    <property type="entry name" value="Isoleucyl-tRNA Synthetase, Domain 1"/>
    <property type="match status" value="1"/>
</dbReference>
<dbReference type="Gene3D" id="1.10.287.380">
    <property type="entry name" value="Valyl-tRNA synthetase, C-terminal domain"/>
    <property type="match status" value="1"/>
</dbReference>
<dbReference type="Gene3D" id="3.90.740.10">
    <property type="entry name" value="Valyl/Leucyl/Isoleucyl-tRNA synthetase, editing domain"/>
    <property type="match status" value="1"/>
</dbReference>
<dbReference type="HAMAP" id="MF_02004">
    <property type="entry name" value="Val_tRNA_synth_type1"/>
    <property type="match status" value="1"/>
</dbReference>
<dbReference type="InterPro" id="IPR001412">
    <property type="entry name" value="aa-tRNA-synth_I_CS"/>
</dbReference>
<dbReference type="InterPro" id="IPR002300">
    <property type="entry name" value="aa-tRNA-synth_Ia"/>
</dbReference>
<dbReference type="InterPro" id="IPR033705">
    <property type="entry name" value="Anticodon_Ia_Val"/>
</dbReference>
<dbReference type="InterPro" id="IPR013155">
    <property type="entry name" value="M/V/L/I-tRNA-synth_anticd-bd"/>
</dbReference>
<dbReference type="InterPro" id="IPR014729">
    <property type="entry name" value="Rossmann-like_a/b/a_fold"/>
</dbReference>
<dbReference type="InterPro" id="IPR010978">
    <property type="entry name" value="tRNA-bd_arm"/>
</dbReference>
<dbReference type="InterPro" id="IPR009080">
    <property type="entry name" value="tRNAsynth_Ia_anticodon-bd"/>
</dbReference>
<dbReference type="InterPro" id="IPR037118">
    <property type="entry name" value="Val-tRNA_synth_C_sf"/>
</dbReference>
<dbReference type="InterPro" id="IPR019499">
    <property type="entry name" value="Val-tRNA_synth_tRNA-bd"/>
</dbReference>
<dbReference type="InterPro" id="IPR009008">
    <property type="entry name" value="Val/Leu/Ile-tRNA-synth_edit"/>
</dbReference>
<dbReference type="InterPro" id="IPR002303">
    <property type="entry name" value="Valyl-tRNA_ligase"/>
</dbReference>
<dbReference type="NCBIfam" id="NF004349">
    <property type="entry name" value="PRK05729.1"/>
    <property type="match status" value="1"/>
</dbReference>
<dbReference type="NCBIfam" id="TIGR00422">
    <property type="entry name" value="valS"/>
    <property type="match status" value="1"/>
</dbReference>
<dbReference type="PANTHER" id="PTHR11946:SF93">
    <property type="entry name" value="VALINE--TRNA LIGASE, CHLOROPLASTIC_MITOCHONDRIAL 2"/>
    <property type="match status" value="1"/>
</dbReference>
<dbReference type="PANTHER" id="PTHR11946">
    <property type="entry name" value="VALYL-TRNA SYNTHETASES"/>
    <property type="match status" value="1"/>
</dbReference>
<dbReference type="Pfam" id="PF08264">
    <property type="entry name" value="Anticodon_1"/>
    <property type="match status" value="1"/>
</dbReference>
<dbReference type="Pfam" id="PF00133">
    <property type="entry name" value="tRNA-synt_1"/>
    <property type="match status" value="1"/>
</dbReference>
<dbReference type="Pfam" id="PF10458">
    <property type="entry name" value="Val_tRNA-synt_C"/>
    <property type="match status" value="1"/>
</dbReference>
<dbReference type="PRINTS" id="PR00986">
    <property type="entry name" value="TRNASYNTHVAL"/>
</dbReference>
<dbReference type="SUPFAM" id="SSF47323">
    <property type="entry name" value="Anticodon-binding domain of a subclass of class I aminoacyl-tRNA synthetases"/>
    <property type="match status" value="1"/>
</dbReference>
<dbReference type="SUPFAM" id="SSF52374">
    <property type="entry name" value="Nucleotidylyl transferase"/>
    <property type="match status" value="1"/>
</dbReference>
<dbReference type="SUPFAM" id="SSF46589">
    <property type="entry name" value="tRNA-binding arm"/>
    <property type="match status" value="1"/>
</dbReference>
<dbReference type="SUPFAM" id="SSF50677">
    <property type="entry name" value="ValRS/IleRS/LeuRS editing domain"/>
    <property type="match status" value="1"/>
</dbReference>
<dbReference type="PROSITE" id="PS00178">
    <property type="entry name" value="AA_TRNA_LIGASE_I"/>
    <property type="match status" value="1"/>
</dbReference>
<keyword id="KW-0030">Aminoacyl-tRNA synthetase</keyword>
<keyword id="KW-0067">ATP-binding</keyword>
<keyword id="KW-0175">Coiled coil</keyword>
<keyword id="KW-0963">Cytoplasm</keyword>
<keyword id="KW-0436">Ligase</keyword>
<keyword id="KW-0547">Nucleotide-binding</keyword>
<keyword id="KW-0648">Protein biosynthesis</keyword>
<keyword id="KW-1185">Reference proteome</keyword>
<evidence type="ECO:0000255" key="1">
    <source>
        <dbReference type="HAMAP-Rule" id="MF_02004"/>
    </source>
</evidence>
<proteinExistence type="inferred from homology"/>
<accession>C1D6J9</accession>
<reference key="1">
    <citation type="journal article" date="2009" name="PLoS Genet.">
        <title>The complete genome and proteome of Laribacter hongkongensis reveal potential mechanisms for adaptations to different temperatures and habitats.</title>
        <authorList>
            <person name="Woo P.C.Y."/>
            <person name="Lau S.K.P."/>
            <person name="Tse H."/>
            <person name="Teng J.L.L."/>
            <person name="Curreem S.O."/>
            <person name="Tsang A.K.L."/>
            <person name="Fan R.Y.Y."/>
            <person name="Wong G.K.M."/>
            <person name="Huang Y."/>
            <person name="Loman N.J."/>
            <person name="Snyder L.A.S."/>
            <person name="Cai J.J."/>
            <person name="Huang J.-D."/>
            <person name="Mak W."/>
            <person name="Pallen M.J."/>
            <person name="Lok S."/>
            <person name="Yuen K.-Y."/>
        </authorList>
    </citation>
    <scope>NUCLEOTIDE SEQUENCE [LARGE SCALE GENOMIC DNA]</scope>
    <source>
        <strain>HLHK9</strain>
    </source>
</reference>
<feature type="chain" id="PRO_1000189241" description="Valine--tRNA ligase">
    <location>
        <begin position="1"/>
        <end position="937"/>
    </location>
</feature>
<feature type="coiled-coil region" evidence="1">
    <location>
        <begin position="874"/>
        <end position="937"/>
    </location>
</feature>
<feature type="short sequence motif" description="'HIGH' region">
    <location>
        <begin position="44"/>
        <end position="54"/>
    </location>
</feature>
<feature type="short sequence motif" description="'KMSKS' region">
    <location>
        <begin position="548"/>
        <end position="552"/>
    </location>
</feature>
<feature type="binding site" evidence="1">
    <location>
        <position position="551"/>
    </location>
    <ligand>
        <name>ATP</name>
        <dbReference type="ChEBI" id="CHEBI:30616"/>
    </ligand>
</feature>
<comment type="function">
    <text evidence="1">Catalyzes the attachment of valine to tRNA(Val). As ValRS can inadvertently accommodate and process structurally similar amino acids such as threonine, to avoid such errors, it has a 'posttransfer' editing activity that hydrolyzes mischarged Thr-tRNA(Val) in a tRNA-dependent manner.</text>
</comment>
<comment type="catalytic activity">
    <reaction evidence="1">
        <text>tRNA(Val) + L-valine + ATP = L-valyl-tRNA(Val) + AMP + diphosphate</text>
        <dbReference type="Rhea" id="RHEA:10704"/>
        <dbReference type="Rhea" id="RHEA-COMP:9672"/>
        <dbReference type="Rhea" id="RHEA-COMP:9708"/>
        <dbReference type="ChEBI" id="CHEBI:30616"/>
        <dbReference type="ChEBI" id="CHEBI:33019"/>
        <dbReference type="ChEBI" id="CHEBI:57762"/>
        <dbReference type="ChEBI" id="CHEBI:78442"/>
        <dbReference type="ChEBI" id="CHEBI:78537"/>
        <dbReference type="ChEBI" id="CHEBI:456215"/>
        <dbReference type="EC" id="6.1.1.9"/>
    </reaction>
</comment>
<comment type="subunit">
    <text evidence="1">Monomer.</text>
</comment>
<comment type="subcellular location">
    <subcellularLocation>
        <location evidence="1">Cytoplasm</location>
    </subcellularLocation>
</comment>
<comment type="domain">
    <text evidence="1">ValRS has two distinct active sites: one for aminoacylation and one for editing. The misactivated threonine is translocated from the active site to the editing site.</text>
</comment>
<comment type="domain">
    <text evidence="1">The C-terminal coiled-coil domain is crucial for aminoacylation activity.</text>
</comment>
<comment type="similarity">
    <text evidence="1">Belongs to the class-I aminoacyl-tRNA synthetase family. ValS type 1 subfamily.</text>
</comment>
<organism>
    <name type="scientific">Laribacter hongkongensis (strain HLHK9)</name>
    <dbReference type="NCBI Taxonomy" id="557598"/>
    <lineage>
        <taxon>Bacteria</taxon>
        <taxon>Pseudomonadati</taxon>
        <taxon>Pseudomonadota</taxon>
        <taxon>Betaproteobacteria</taxon>
        <taxon>Neisseriales</taxon>
        <taxon>Aquaspirillaceae</taxon>
        <taxon>Laribacter</taxon>
    </lineage>
</organism>
<sequence length="937" mass="104928">MELAKSFEPGNIENRWYDRWEAAGYFKPSMDTDRPSFCIQLPPPNVTGTLHMGHAFNQTIMDGLTRYYRMKGDNTLWVPGADHAGIATQIVVERQLAEQGVSRHDLGRDTFIGKVWEWKEKSGGTITSQMRRVGCSVDWDKEYFTMDDKMSTAVTEVFVRLYEQGLIYRGKRLVNWDPKLGTAVSDLEVISEEEDGKMWHIRYPVVGSDDVVVVATTRPETLLGDVAVAVNPDDERYRHLVGKQLELPLTGRTIPVIADDYVDAAFGTGFVKITPAHDFNDYQVGKRHNTALINVMSLDATMLAKAQVFGFDGSAQGSIDLPAAYAGLSTADARKAMLADLDAAGLLVDTKPHKLMVPRGDRTGSVIEPLLTDQWFVAMTKVGEGDATGKSITQKAIDAVESGEVRFVPENWVNTYNQWMNNIQDWCISRQLWWGHQIPAWYDEDGKAYVGRTLEEVQAKAPGKTLRRDEDVLDTWFSSALVPFSSLGWPNETPELKAFVPSQVLVTGYEIIFFWVARMIMMTTHFLGKVPFKDVYIHGIVRDHEGKKMSKSEGNVIDPVDLIDGIALPELITKRTTGLRRPEKAPQIVKATEKLFPEGIPAYGTDALRFTMASYASLGRSVNFDFKRAEGYRNFCNKLWNATRFVMMNVEGKDCGQDESLPLEYSFVDKWIISRLQELEAAVTEALDTYRFDMASQLIYEFVWNEYCDWYVELAKVQLANGNEAQQRATRRTLVRVLEVALRLTHPLMPFITEELWQTVAPLANAKKTDSIMVAAWPVADMSKVDAEACGRMTVFKELVNAIRNLRGEMNLGPSVKAPLFVEGPAAYADFLPYARLLGRLSDAAVVEKLPDADAPVAIAGEARLMLKVEIDKAAETARLTKEIGKAESDVEKLTAKLEKPGYVDKAPAQLVERDRAQLADLTDKLAKLKAQLLKLA</sequence>
<name>SYV_LARHH</name>
<protein>
    <recommendedName>
        <fullName evidence="1">Valine--tRNA ligase</fullName>
        <ecNumber evidence="1">6.1.1.9</ecNumber>
    </recommendedName>
    <alternativeName>
        <fullName evidence="1">Valyl-tRNA synthetase</fullName>
        <shortName evidence="1">ValRS</shortName>
    </alternativeName>
</protein>